<feature type="peptide" id="PRO_0000009035" description="Fibrinopeptide A">
    <location>
        <begin position="1"/>
        <end position="16"/>
    </location>
</feature>
<feature type="non-terminal residue">
    <location>
        <position position="16"/>
    </location>
</feature>
<gene>
    <name type="primary">FGA</name>
</gene>
<dbReference type="PIR" id="B28854">
    <property type="entry name" value="B28854"/>
</dbReference>
<dbReference type="SMR" id="P68114"/>
<dbReference type="GO" id="GO:0005576">
    <property type="term" value="C:extracellular region"/>
    <property type="evidence" value="ECO:0007669"/>
    <property type="project" value="UniProtKB-SubCell"/>
</dbReference>
<dbReference type="GO" id="GO:0002250">
    <property type="term" value="P:adaptive immune response"/>
    <property type="evidence" value="ECO:0007669"/>
    <property type="project" value="UniProtKB-KW"/>
</dbReference>
<dbReference type="GO" id="GO:0007596">
    <property type="term" value="P:blood coagulation"/>
    <property type="evidence" value="ECO:0007669"/>
    <property type="project" value="UniProtKB-KW"/>
</dbReference>
<dbReference type="GO" id="GO:0045087">
    <property type="term" value="P:innate immune response"/>
    <property type="evidence" value="ECO:0007669"/>
    <property type="project" value="UniProtKB-KW"/>
</dbReference>
<comment type="function">
    <text evidence="1">Cleaved by the protease thrombin to yield monomers which, together with fibrinogen beta (FGB) and fibrinogen gamma (FGG), polymerize to form an insoluble fibrin matrix. Fibrin has a major function in hemostasis as one of the primary components of blood clots. In addition, functions during the early stages of wound repair to stabilize the lesion and guide cell migration during re-epithelialization. Was originally thought to be essential for platelet aggregation, based on in vitro studies using anticoagulated blood. However, subsequent studies have shown that it is not absolutely required for thrombus formation in vivo. Enhances expression of SELP in activated platelets via an ITGB3-dependent pathway. Maternal fibrinogen is essential for successful pregnancy. Fibrin deposition is also associated with infection, where it protects against IFNG-mediated hemorrhage. May also facilitate the immune response via both innate and T-cell mediated pathways.</text>
</comment>
<comment type="subunit">
    <text evidence="2">Heterohexamer; disulfide linked. Contains 2 sets of 3 non-identical chains (alpha, beta and gamma). The 2 heterotrimers are in head to head conformation with the N-termini in a small central domain (By similarity).</text>
</comment>
<comment type="subcellular location">
    <subcellularLocation>
        <location>Secreted</location>
    </subcellularLocation>
</comment>
<comment type="domain">
    <text evidence="2">A long coiled coil structure formed by 3 polypeptide chains connects the central nodule to the C-terminal domains (distal nodules). The long C-terminal ends of the alpha chains fold back, contributing a fourth strand to the coiled coil structure.</text>
</comment>
<comment type="PTM">
    <text>Conversion of fibrinogen to fibrin is triggered by thrombin, which cleaves fibrinopeptides A and B from alpha and beta chains, and thus exposes the N-terminal polymerization sites responsible for the formation of the soft clot. The soft clot is converted into the hard clot by factor XIIIA which catalyzes the epsilon-(gamma-glutamyl)lysine cross-linking between gamma chains (stronger) and between alpha chains (weaker) of different monomers.</text>
</comment>
<comment type="PTM">
    <text>Forms F13A-mediated cross-links between a glutamine and the epsilon-amino group of a lysine residue, forming fibronectin-fibrinogen heteropolymers.</text>
</comment>
<reference key="1">
    <citation type="journal article" date="1983" name="J. Biochem.">
        <title>Fibrinopeptides A and B of baboons (Papio anubis, Papio hamadryas, and Theropithecus gelada): their amino acid sequences and evolutionary rates and a molecular phylogeny for the baboons.</title>
        <authorList>
            <person name="Nakamura S."/>
            <person name="Takenaka O."/>
            <person name="Takahashi K."/>
        </authorList>
    </citation>
    <scope>PROTEIN SEQUENCE</scope>
</reference>
<proteinExistence type="evidence at protein level"/>
<name>FIBA_PAPHA</name>
<sequence>ADTGEGDFLAEGGGVR</sequence>
<evidence type="ECO:0000250" key="1">
    <source>
        <dbReference type="UniProtKB" id="E9PV24"/>
    </source>
</evidence>
<evidence type="ECO:0000250" key="2">
    <source>
        <dbReference type="UniProtKB" id="P02671"/>
    </source>
</evidence>
<protein>
    <recommendedName>
        <fullName>Fibrinogen alpha chain</fullName>
    </recommendedName>
    <component>
        <recommendedName>
            <fullName>Fibrinopeptide A</fullName>
        </recommendedName>
    </component>
</protein>
<organism>
    <name type="scientific">Papio hamadryas</name>
    <name type="common">Hamadryas baboon</name>
    <dbReference type="NCBI Taxonomy" id="9557"/>
    <lineage>
        <taxon>Eukaryota</taxon>
        <taxon>Metazoa</taxon>
        <taxon>Chordata</taxon>
        <taxon>Craniata</taxon>
        <taxon>Vertebrata</taxon>
        <taxon>Euteleostomi</taxon>
        <taxon>Mammalia</taxon>
        <taxon>Eutheria</taxon>
        <taxon>Euarchontoglires</taxon>
        <taxon>Primates</taxon>
        <taxon>Haplorrhini</taxon>
        <taxon>Catarrhini</taxon>
        <taxon>Cercopithecidae</taxon>
        <taxon>Cercopithecinae</taxon>
        <taxon>Papio</taxon>
    </lineage>
</organism>
<keyword id="KW-1064">Adaptive immunity</keyword>
<keyword id="KW-0094">Blood coagulation</keyword>
<keyword id="KW-0175">Coiled coil</keyword>
<keyword id="KW-0903">Direct protein sequencing</keyword>
<keyword id="KW-1015">Disulfide bond</keyword>
<keyword id="KW-0356">Hemostasis</keyword>
<keyword id="KW-0391">Immunity</keyword>
<keyword id="KW-0399">Innate immunity</keyword>
<keyword id="KW-0964">Secreted</keyword>
<accession>P68114</accession>
<accession>P12803</accession>